<name>COBT_ECOBW</name>
<protein>
    <recommendedName>
        <fullName evidence="1">Nicotinate-nucleotide--dimethylbenzimidazole phosphoribosyltransferase</fullName>
        <shortName evidence="1">NN:DBI PRT</shortName>
        <ecNumber evidence="1">2.4.2.21</ecNumber>
    </recommendedName>
    <alternativeName>
        <fullName evidence="1">N(1)-alpha-phosphoribosyltransferase</fullName>
    </alternativeName>
</protein>
<evidence type="ECO:0000255" key="1">
    <source>
        <dbReference type="HAMAP-Rule" id="MF_00230"/>
    </source>
</evidence>
<gene>
    <name evidence="1" type="primary">cobT</name>
    <name type="ordered locus">BWG_1785</name>
</gene>
<feature type="chain" id="PRO_1000204366" description="Nicotinate-nucleotide--dimethylbenzimidazole phosphoribosyltransferase">
    <location>
        <begin position="1"/>
        <end position="359"/>
    </location>
</feature>
<feature type="active site" description="Proton acceptor" evidence="1">
    <location>
        <position position="318"/>
    </location>
</feature>
<reference key="1">
    <citation type="journal article" date="2009" name="J. Bacteriol.">
        <title>Genomic sequencing reveals regulatory mutations and recombinational events in the widely used MC4100 lineage of Escherichia coli K-12.</title>
        <authorList>
            <person name="Ferenci T."/>
            <person name="Zhou Z."/>
            <person name="Betteridge T."/>
            <person name="Ren Y."/>
            <person name="Liu Y."/>
            <person name="Feng L."/>
            <person name="Reeves P.R."/>
            <person name="Wang L."/>
        </authorList>
    </citation>
    <scope>NUCLEOTIDE SEQUENCE [LARGE SCALE GENOMIC DNA]</scope>
    <source>
        <strain>K12 / MC4100 / BW2952</strain>
    </source>
</reference>
<keyword id="KW-0169">Cobalamin biosynthesis</keyword>
<keyword id="KW-0328">Glycosyltransferase</keyword>
<keyword id="KW-0808">Transferase</keyword>
<dbReference type="EC" id="2.4.2.21" evidence="1"/>
<dbReference type="EMBL" id="CP001396">
    <property type="protein sequence ID" value="ACR63893.1"/>
    <property type="molecule type" value="Genomic_DNA"/>
</dbReference>
<dbReference type="RefSeq" id="WP_001166160.1">
    <property type="nucleotide sequence ID" value="NC_012759.1"/>
</dbReference>
<dbReference type="SMR" id="C4ZQQ4"/>
<dbReference type="KEGG" id="ebw:BWG_1785"/>
<dbReference type="HOGENOM" id="CLU_002982_0_0_6"/>
<dbReference type="UniPathway" id="UPA00061">
    <property type="reaction ID" value="UER00516"/>
</dbReference>
<dbReference type="GO" id="GO:0008939">
    <property type="term" value="F:nicotinate-nucleotide-dimethylbenzimidazole phosphoribosyltransferase activity"/>
    <property type="evidence" value="ECO:0007669"/>
    <property type="project" value="UniProtKB-UniRule"/>
</dbReference>
<dbReference type="GO" id="GO:0009236">
    <property type="term" value="P:cobalamin biosynthetic process"/>
    <property type="evidence" value="ECO:0007669"/>
    <property type="project" value="UniProtKB-KW"/>
</dbReference>
<dbReference type="CDD" id="cd02439">
    <property type="entry name" value="DMB-PRT_CobT"/>
    <property type="match status" value="1"/>
</dbReference>
<dbReference type="FunFam" id="1.10.1610.10:FF:000001">
    <property type="entry name" value="Nicotinate-nucleotide--dimethylbenzimidazole phosphoribosyltransferase"/>
    <property type="match status" value="1"/>
</dbReference>
<dbReference type="FunFam" id="3.40.50.10210:FF:000001">
    <property type="entry name" value="Nicotinate-nucleotide--dimethylbenzimidazole phosphoribosyltransferase"/>
    <property type="match status" value="1"/>
</dbReference>
<dbReference type="Gene3D" id="1.10.1610.10">
    <property type="match status" value="1"/>
</dbReference>
<dbReference type="Gene3D" id="3.40.50.10210">
    <property type="match status" value="1"/>
</dbReference>
<dbReference type="HAMAP" id="MF_00230">
    <property type="entry name" value="CobT"/>
    <property type="match status" value="1"/>
</dbReference>
<dbReference type="InterPro" id="IPR003200">
    <property type="entry name" value="Nict_dMeBzImd_PRibTrfase"/>
</dbReference>
<dbReference type="InterPro" id="IPR017846">
    <property type="entry name" value="Nict_dMeBzImd_PRibTrfase_bact"/>
</dbReference>
<dbReference type="InterPro" id="IPR023195">
    <property type="entry name" value="Nict_dMeBzImd_PRibTrfase_N"/>
</dbReference>
<dbReference type="InterPro" id="IPR036087">
    <property type="entry name" value="Nict_dMeBzImd_PRibTrfase_sf"/>
</dbReference>
<dbReference type="NCBIfam" id="TIGR03160">
    <property type="entry name" value="cobT_DBIPRT"/>
    <property type="match status" value="1"/>
</dbReference>
<dbReference type="NCBIfam" id="NF000996">
    <property type="entry name" value="PRK00105.1"/>
    <property type="match status" value="1"/>
</dbReference>
<dbReference type="PANTHER" id="PTHR43463">
    <property type="entry name" value="NICOTINATE-NUCLEOTIDE--DIMETHYLBENZIMIDAZOLE PHOSPHORIBOSYLTRANSFERASE"/>
    <property type="match status" value="1"/>
</dbReference>
<dbReference type="PANTHER" id="PTHR43463:SF1">
    <property type="entry name" value="NICOTINATE-NUCLEOTIDE--DIMETHYLBENZIMIDAZOLE PHOSPHORIBOSYLTRANSFERASE"/>
    <property type="match status" value="1"/>
</dbReference>
<dbReference type="Pfam" id="PF02277">
    <property type="entry name" value="DBI_PRT"/>
    <property type="match status" value="1"/>
</dbReference>
<dbReference type="SUPFAM" id="SSF52733">
    <property type="entry name" value="Nicotinate mononucleotide:5,6-dimethylbenzimidazole phosphoribosyltransferase (CobT)"/>
    <property type="match status" value="1"/>
</dbReference>
<comment type="function">
    <text evidence="1">Catalyzes the synthesis of alpha-ribazole-5'-phosphate from nicotinate mononucleotide (NAMN) and 5,6-dimethylbenzimidazole (DMB).</text>
</comment>
<comment type="catalytic activity">
    <reaction evidence="1">
        <text>5,6-dimethylbenzimidazole + nicotinate beta-D-ribonucleotide = alpha-ribazole 5'-phosphate + nicotinate + H(+)</text>
        <dbReference type="Rhea" id="RHEA:11196"/>
        <dbReference type="ChEBI" id="CHEBI:15378"/>
        <dbReference type="ChEBI" id="CHEBI:15890"/>
        <dbReference type="ChEBI" id="CHEBI:32544"/>
        <dbReference type="ChEBI" id="CHEBI:57502"/>
        <dbReference type="ChEBI" id="CHEBI:57918"/>
        <dbReference type="EC" id="2.4.2.21"/>
    </reaction>
</comment>
<comment type="pathway">
    <text evidence="1">Nucleoside biosynthesis; alpha-ribazole biosynthesis; alpha-ribazole from 5,6-dimethylbenzimidazole: step 1/2.</text>
</comment>
<comment type="subunit">
    <text evidence="1">Homodimer.</text>
</comment>
<comment type="similarity">
    <text evidence="1">Belongs to the CobT family.</text>
</comment>
<organism>
    <name type="scientific">Escherichia coli (strain K12 / MC4100 / BW2952)</name>
    <dbReference type="NCBI Taxonomy" id="595496"/>
    <lineage>
        <taxon>Bacteria</taxon>
        <taxon>Pseudomonadati</taxon>
        <taxon>Pseudomonadota</taxon>
        <taxon>Gammaproteobacteria</taxon>
        <taxon>Enterobacterales</taxon>
        <taxon>Enterobacteriaceae</taxon>
        <taxon>Escherichia</taxon>
    </lineage>
</organism>
<sequence length="359" mass="36987">MQILADLLNTIPAIDSTAMSRAQRHIDGLLKPVGSLGKLEVLAIQLAGMPGLNGIPHVGKKAVLVMCADHGVWEEGVAISPKEVTAIQAENMTRGTTGVCVLAEQAGANVHVIDVGIDTAEPIPGLINMRVARGSGNIASAPAMSRRQAEKLLLDVICYTQELAKNGVTLFGVGELGMANTTPAAAIVSTITGRDPEEVVGIGANLPTDKLANKIDVVRRAITLNQPNPQDGVDVLAKVGGFDLVGIAGVMLGAASCGLPVLLDGFLSYAAALAACQMSPAIKPYLIPSHLSAEKGARIALSHLGLEPYLNMEMRLGEGSGAALAMPIIEAACAIYNNMGELAASNIVLPGNTTSDLNS</sequence>
<accession>C4ZQQ4</accession>
<proteinExistence type="inferred from homology"/>